<reference key="1">
    <citation type="journal article" date="2007" name="PLoS Genet.">
        <title>Patterns and implications of gene gain and loss in the evolution of Prochlorococcus.</title>
        <authorList>
            <person name="Kettler G.C."/>
            <person name="Martiny A.C."/>
            <person name="Huang K."/>
            <person name="Zucker J."/>
            <person name="Coleman M.L."/>
            <person name="Rodrigue S."/>
            <person name="Chen F."/>
            <person name="Lapidus A."/>
            <person name="Ferriera S."/>
            <person name="Johnson J."/>
            <person name="Steglich C."/>
            <person name="Church G.M."/>
            <person name="Richardson P."/>
            <person name="Chisholm S.W."/>
        </authorList>
    </citation>
    <scope>NUCLEOTIDE SEQUENCE [LARGE SCALE GENOMIC DNA]</scope>
    <source>
        <strain>MIT 9215</strain>
    </source>
</reference>
<accession>A8G5G4</accession>
<organism>
    <name type="scientific">Prochlorococcus marinus (strain MIT 9215)</name>
    <dbReference type="NCBI Taxonomy" id="93060"/>
    <lineage>
        <taxon>Bacteria</taxon>
        <taxon>Bacillati</taxon>
        <taxon>Cyanobacteriota</taxon>
        <taxon>Cyanophyceae</taxon>
        <taxon>Synechococcales</taxon>
        <taxon>Prochlorococcaceae</taxon>
        <taxon>Prochlorococcus</taxon>
    </lineage>
</organism>
<protein>
    <recommendedName>
        <fullName evidence="1">tRNA uridine(34) hydroxylase</fullName>
        <ecNumber evidence="1">1.14.-.-</ecNumber>
    </recommendedName>
    <alternativeName>
        <fullName evidence="1">tRNA hydroxylation protein O</fullName>
    </alternativeName>
</protein>
<keyword id="KW-0560">Oxidoreductase</keyword>
<keyword id="KW-0819">tRNA processing</keyword>
<proteinExistence type="inferred from homology"/>
<name>TRHO_PROM2</name>
<comment type="function">
    <text evidence="1">Catalyzes oxygen-dependent 5-hydroxyuridine (ho5U) modification at position 34 in tRNAs.</text>
</comment>
<comment type="catalytic activity">
    <reaction evidence="1">
        <text>uridine(34) in tRNA + AH2 + O2 = 5-hydroxyuridine(34) in tRNA + A + H2O</text>
        <dbReference type="Rhea" id="RHEA:64224"/>
        <dbReference type="Rhea" id="RHEA-COMP:11727"/>
        <dbReference type="Rhea" id="RHEA-COMP:13381"/>
        <dbReference type="ChEBI" id="CHEBI:13193"/>
        <dbReference type="ChEBI" id="CHEBI:15377"/>
        <dbReference type="ChEBI" id="CHEBI:15379"/>
        <dbReference type="ChEBI" id="CHEBI:17499"/>
        <dbReference type="ChEBI" id="CHEBI:65315"/>
        <dbReference type="ChEBI" id="CHEBI:136877"/>
    </reaction>
</comment>
<comment type="similarity">
    <text evidence="1">Belongs to the TrhO family.</text>
</comment>
<feature type="chain" id="PRO_1000060369" description="tRNA uridine(34) hydroxylase">
    <location>
        <begin position="1"/>
        <end position="310"/>
    </location>
</feature>
<feature type="domain" description="Rhodanese" evidence="1">
    <location>
        <begin position="127"/>
        <end position="225"/>
    </location>
</feature>
<feature type="active site" description="Cysteine persulfide intermediate" evidence="1">
    <location>
        <position position="185"/>
    </location>
</feature>
<dbReference type="EC" id="1.14.-.-" evidence="1"/>
<dbReference type="EMBL" id="CP000825">
    <property type="protein sequence ID" value="ABV50845.1"/>
    <property type="molecule type" value="Genomic_DNA"/>
</dbReference>
<dbReference type="RefSeq" id="WP_012007918.1">
    <property type="nucleotide sequence ID" value="NC_009840.1"/>
</dbReference>
<dbReference type="SMR" id="A8G5G4"/>
<dbReference type="STRING" id="93060.P9215_12301"/>
<dbReference type="KEGG" id="pmh:P9215_12301"/>
<dbReference type="eggNOG" id="COG1054">
    <property type="taxonomic scope" value="Bacteria"/>
</dbReference>
<dbReference type="HOGENOM" id="CLU_038878_0_0_3"/>
<dbReference type="OrthoDB" id="9778326at2"/>
<dbReference type="Proteomes" id="UP000002014">
    <property type="component" value="Chromosome"/>
</dbReference>
<dbReference type="GO" id="GO:0016705">
    <property type="term" value="F:oxidoreductase activity, acting on paired donors, with incorporation or reduction of molecular oxygen"/>
    <property type="evidence" value="ECO:0007669"/>
    <property type="project" value="UniProtKB-UniRule"/>
</dbReference>
<dbReference type="GO" id="GO:0006400">
    <property type="term" value="P:tRNA modification"/>
    <property type="evidence" value="ECO:0007669"/>
    <property type="project" value="UniProtKB-UniRule"/>
</dbReference>
<dbReference type="CDD" id="cd01518">
    <property type="entry name" value="RHOD_YceA"/>
    <property type="match status" value="1"/>
</dbReference>
<dbReference type="Gene3D" id="3.30.70.100">
    <property type="match status" value="1"/>
</dbReference>
<dbReference type="Gene3D" id="3.40.250.10">
    <property type="entry name" value="Rhodanese-like domain"/>
    <property type="match status" value="1"/>
</dbReference>
<dbReference type="HAMAP" id="MF_00469">
    <property type="entry name" value="TrhO"/>
    <property type="match status" value="1"/>
</dbReference>
<dbReference type="InterPro" id="IPR001763">
    <property type="entry name" value="Rhodanese-like_dom"/>
</dbReference>
<dbReference type="InterPro" id="IPR036873">
    <property type="entry name" value="Rhodanese-like_dom_sf"/>
</dbReference>
<dbReference type="InterPro" id="IPR020936">
    <property type="entry name" value="TrhO"/>
</dbReference>
<dbReference type="InterPro" id="IPR040503">
    <property type="entry name" value="TRHO_N"/>
</dbReference>
<dbReference type="NCBIfam" id="NF001136">
    <property type="entry name" value="PRK00142.1-4"/>
    <property type="match status" value="1"/>
</dbReference>
<dbReference type="PANTHER" id="PTHR43268:SF3">
    <property type="entry name" value="RHODANESE-LIKE DOMAIN-CONTAINING PROTEIN 7-RELATED"/>
    <property type="match status" value="1"/>
</dbReference>
<dbReference type="PANTHER" id="PTHR43268">
    <property type="entry name" value="THIOSULFATE SULFURTRANSFERASE/RHODANESE-LIKE DOMAIN-CONTAINING PROTEIN 2"/>
    <property type="match status" value="1"/>
</dbReference>
<dbReference type="Pfam" id="PF00581">
    <property type="entry name" value="Rhodanese"/>
    <property type="match status" value="1"/>
</dbReference>
<dbReference type="Pfam" id="PF17773">
    <property type="entry name" value="UPF0176_N"/>
    <property type="match status" value="1"/>
</dbReference>
<dbReference type="SMART" id="SM00450">
    <property type="entry name" value="RHOD"/>
    <property type="match status" value="1"/>
</dbReference>
<dbReference type="SUPFAM" id="SSF52821">
    <property type="entry name" value="Rhodanese/Cell cycle control phosphatase"/>
    <property type="match status" value="1"/>
</dbReference>
<dbReference type="PROSITE" id="PS50206">
    <property type="entry name" value="RHODANESE_3"/>
    <property type="match status" value="1"/>
</dbReference>
<evidence type="ECO:0000255" key="1">
    <source>
        <dbReference type="HAMAP-Rule" id="MF_00469"/>
    </source>
</evidence>
<gene>
    <name evidence="1" type="primary">trhO</name>
    <name type="ordered locus">P9215_12301</name>
</gene>
<sequence>MKSKIYKIISLYSFFPFQEKLIIDLKNKLLEIENENDLSGLLIFAREGINGTICAEKNVIDIVINLINKYADYRNLNIKVNFSKKKVFKKLKIKIKKEIVTMGVPEINPSENNGTYIDSTDWNKLIKNQNTIVIDTRNHYEVSIGTFQNSINPNTRNFSEFPKWVDDHLDNHLEDKESTNIAMFCTGGIRCEKATSLLKKKGYKNIYHLQGGILQYLDEISKEENLFEGECYVFDKRVALDQELEKGSYSICHACGMPVSIQDQKRKEYRKGIQCHFCIDQFSDDDRKRFEERQKQIDRLKVENHKIYKD</sequence>